<organism>
    <name type="scientific">Bacillus cereus (strain ATCC 14579 / DSM 31 / CCUG 7414 / JCM 2152 / NBRC 15305 / NCIMB 9373 / NCTC 2599 / NRRL B-3711)</name>
    <dbReference type="NCBI Taxonomy" id="226900"/>
    <lineage>
        <taxon>Bacteria</taxon>
        <taxon>Bacillati</taxon>
        <taxon>Bacillota</taxon>
        <taxon>Bacilli</taxon>
        <taxon>Bacillales</taxon>
        <taxon>Bacillaceae</taxon>
        <taxon>Bacillus</taxon>
        <taxon>Bacillus cereus group</taxon>
    </lineage>
</organism>
<accession>Q818F0</accession>
<protein>
    <recommendedName>
        <fullName evidence="1">Chaperone protein DnaJ</fullName>
    </recommendedName>
</protein>
<comment type="function">
    <text evidence="1">Participates actively in the response to hyperosmotic and heat shock by preventing the aggregation of stress-denatured proteins and by disaggregating proteins, also in an autonomous, DnaK-independent fashion. Unfolded proteins bind initially to DnaJ; upon interaction with the DnaJ-bound protein, DnaK hydrolyzes its bound ATP, resulting in the formation of a stable complex. GrpE releases ADP from DnaK; ATP binding to DnaK triggers the release of the substrate protein, thus completing the reaction cycle. Several rounds of ATP-dependent interactions between DnaJ, DnaK and GrpE are required for fully efficient folding. Also involved, together with DnaK and GrpE, in the DNA replication of plasmids through activation of initiation proteins.</text>
</comment>
<comment type="cofactor">
    <cofactor evidence="1">
        <name>Zn(2+)</name>
        <dbReference type="ChEBI" id="CHEBI:29105"/>
    </cofactor>
    <text evidence="1">Binds 2 Zn(2+) ions per monomer.</text>
</comment>
<comment type="subunit">
    <text evidence="1">Homodimer.</text>
</comment>
<comment type="subcellular location">
    <subcellularLocation>
        <location evidence="1">Cytoplasm</location>
    </subcellularLocation>
</comment>
<comment type="domain">
    <text evidence="1">The J domain is necessary and sufficient to stimulate DnaK ATPase activity. Zinc center 1 plays an important role in the autonomous, DnaK-independent chaperone activity of DnaJ. Zinc center 2 is essential for interaction with DnaK and for DnaJ activity.</text>
</comment>
<comment type="similarity">
    <text evidence="1">Belongs to the DnaJ family.</text>
</comment>
<proteinExistence type="inferred from homology"/>
<sequence>MSKRDYYEVLGLSKGASTDEIKKAYRRLAKKYHPDVSKEENAIEKFKEVQEAYEVLSDDQKRAQYDQFGHAGANQGFGGFGGGGDFGGGFGFEDIFSSFFGGGGGRRRDPNAPRQGADLQYQVTLDFEEAIFGKELNVEIPVEDPCDTCKGSGAKPGTSKETCKHCSGSGQVSVEQNTPFGRIVNRQACGHCSGTGQIIKEKCTTCHGSSKVRKRKKINVKIPAGIDNGQQIRVSGKGEAGVNGGPARDLYVVVHVRNHEFFEREGDHIICEMPLTFAQMALGDEVEVPTVHGKVKLKIPAGTQTGTEFRLKGKGAPNVRGYGQGDQYVVVRVVVPTKLTSQQKDLLREFAGQEEQDDSLFGKLKRAFKGE</sequence>
<evidence type="ECO:0000255" key="1">
    <source>
        <dbReference type="HAMAP-Rule" id="MF_01152"/>
    </source>
</evidence>
<reference key="1">
    <citation type="journal article" date="2003" name="Nature">
        <title>Genome sequence of Bacillus cereus and comparative analysis with Bacillus anthracis.</title>
        <authorList>
            <person name="Ivanova N."/>
            <person name="Sorokin A."/>
            <person name="Anderson I."/>
            <person name="Galleron N."/>
            <person name="Candelon B."/>
            <person name="Kapatral V."/>
            <person name="Bhattacharyya A."/>
            <person name="Reznik G."/>
            <person name="Mikhailova N."/>
            <person name="Lapidus A."/>
            <person name="Chu L."/>
            <person name="Mazur M."/>
            <person name="Goltsman E."/>
            <person name="Larsen N."/>
            <person name="D'Souza M."/>
            <person name="Walunas T."/>
            <person name="Grechkin Y."/>
            <person name="Pusch G."/>
            <person name="Haselkorn R."/>
            <person name="Fonstein M."/>
            <person name="Ehrlich S.D."/>
            <person name="Overbeek R."/>
            <person name="Kyrpides N.C."/>
        </authorList>
    </citation>
    <scope>NUCLEOTIDE SEQUENCE [LARGE SCALE GENOMIC DNA]</scope>
    <source>
        <strain>ATCC 14579 / DSM 31 / CCUG 7414 / JCM 2152 / NBRC 15305 / NCIMB 9373 / NCTC 2599 / NRRL B-3711</strain>
    </source>
</reference>
<keyword id="KW-0143">Chaperone</keyword>
<keyword id="KW-0963">Cytoplasm</keyword>
<keyword id="KW-0235">DNA replication</keyword>
<keyword id="KW-0479">Metal-binding</keyword>
<keyword id="KW-1185">Reference proteome</keyword>
<keyword id="KW-0677">Repeat</keyword>
<keyword id="KW-0346">Stress response</keyword>
<keyword id="KW-0862">Zinc</keyword>
<keyword id="KW-0863">Zinc-finger</keyword>
<gene>
    <name evidence="1" type="primary">dnaJ</name>
    <name type="ordered locus">BC_4311</name>
</gene>
<dbReference type="EMBL" id="AE016877">
    <property type="protein sequence ID" value="AAP11224.1"/>
    <property type="molecule type" value="Genomic_DNA"/>
</dbReference>
<dbReference type="RefSeq" id="NP_834023.1">
    <property type="nucleotide sequence ID" value="NC_004722.1"/>
</dbReference>
<dbReference type="RefSeq" id="WP_000043949.1">
    <property type="nucleotide sequence ID" value="NC_004722.1"/>
</dbReference>
<dbReference type="SMR" id="Q818F0"/>
<dbReference type="STRING" id="226900.BC_4311"/>
<dbReference type="KEGG" id="bce:BC4311"/>
<dbReference type="PATRIC" id="fig|226900.8.peg.4458"/>
<dbReference type="HOGENOM" id="CLU_017633_0_7_9"/>
<dbReference type="Proteomes" id="UP000001417">
    <property type="component" value="Chromosome"/>
</dbReference>
<dbReference type="GO" id="GO:0005737">
    <property type="term" value="C:cytoplasm"/>
    <property type="evidence" value="ECO:0000318"/>
    <property type="project" value="GO_Central"/>
</dbReference>
<dbReference type="GO" id="GO:0005524">
    <property type="term" value="F:ATP binding"/>
    <property type="evidence" value="ECO:0007669"/>
    <property type="project" value="InterPro"/>
</dbReference>
<dbReference type="GO" id="GO:0031072">
    <property type="term" value="F:heat shock protein binding"/>
    <property type="evidence" value="ECO:0007669"/>
    <property type="project" value="InterPro"/>
</dbReference>
<dbReference type="GO" id="GO:0051082">
    <property type="term" value="F:unfolded protein binding"/>
    <property type="evidence" value="ECO:0000318"/>
    <property type="project" value="GO_Central"/>
</dbReference>
<dbReference type="GO" id="GO:0008270">
    <property type="term" value="F:zinc ion binding"/>
    <property type="evidence" value="ECO:0007669"/>
    <property type="project" value="UniProtKB-UniRule"/>
</dbReference>
<dbReference type="GO" id="GO:0051085">
    <property type="term" value="P:chaperone cofactor-dependent protein refolding"/>
    <property type="evidence" value="ECO:0000318"/>
    <property type="project" value="GO_Central"/>
</dbReference>
<dbReference type="GO" id="GO:0006260">
    <property type="term" value="P:DNA replication"/>
    <property type="evidence" value="ECO:0007669"/>
    <property type="project" value="UniProtKB-KW"/>
</dbReference>
<dbReference type="GO" id="GO:0042026">
    <property type="term" value="P:protein refolding"/>
    <property type="evidence" value="ECO:0000318"/>
    <property type="project" value="GO_Central"/>
</dbReference>
<dbReference type="GO" id="GO:0009408">
    <property type="term" value="P:response to heat"/>
    <property type="evidence" value="ECO:0007669"/>
    <property type="project" value="InterPro"/>
</dbReference>
<dbReference type="CDD" id="cd06257">
    <property type="entry name" value="DnaJ"/>
    <property type="match status" value="1"/>
</dbReference>
<dbReference type="CDD" id="cd10747">
    <property type="entry name" value="DnaJ_C"/>
    <property type="match status" value="1"/>
</dbReference>
<dbReference type="CDD" id="cd10719">
    <property type="entry name" value="DnaJ_zf"/>
    <property type="match status" value="1"/>
</dbReference>
<dbReference type="FunFam" id="1.10.287.110:FF:000031">
    <property type="entry name" value="Molecular chaperone DnaJ"/>
    <property type="match status" value="1"/>
</dbReference>
<dbReference type="FunFam" id="2.10.230.10:FF:000002">
    <property type="entry name" value="Molecular chaperone DnaJ"/>
    <property type="match status" value="1"/>
</dbReference>
<dbReference type="FunFam" id="2.60.260.20:FF:000004">
    <property type="entry name" value="Molecular chaperone DnaJ"/>
    <property type="match status" value="1"/>
</dbReference>
<dbReference type="Gene3D" id="1.10.287.110">
    <property type="entry name" value="DnaJ domain"/>
    <property type="match status" value="1"/>
</dbReference>
<dbReference type="Gene3D" id="2.10.230.10">
    <property type="entry name" value="Heat shock protein DnaJ, cysteine-rich domain"/>
    <property type="match status" value="1"/>
</dbReference>
<dbReference type="Gene3D" id="2.60.260.20">
    <property type="entry name" value="Urease metallochaperone UreE, N-terminal domain"/>
    <property type="match status" value="2"/>
</dbReference>
<dbReference type="HAMAP" id="MF_01152">
    <property type="entry name" value="DnaJ"/>
    <property type="match status" value="1"/>
</dbReference>
<dbReference type="InterPro" id="IPR012724">
    <property type="entry name" value="DnaJ"/>
</dbReference>
<dbReference type="InterPro" id="IPR002939">
    <property type="entry name" value="DnaJ_C"/>
</dbReference>
<dbReference type="InterPro" id="IPR001623">
    <property type="entry name" value="DnaJ_domain"/>
</dbReference>
<dbReference type="InterPro" id="IPR018253">
    <property type="entry name" value="DnaJ_domain_CS"/>
</dbReference>
<dbReference type="InterPro" id="IPR008971">
    <property type="entry name" value="HSP40/DnaJ_pept-bd"/>
</dbReference>
<dbReference type="InterPro" id="IPR001305">
    <property type="entry name" value="HSP_DnaJ_Cys-rich_dom"/>
</dbReference>
<dbReference type="InterPro" id="IPR036410">
    <property type="entry name" value="HSP_DnaJ_Cys-rich_dom_sf"/>
</dbReference>
<dbReference type="InterPro" id="IPR036869">
    <property type="entry name" value="J_dom_sf"/>
</dbReference>
<dbReference type="NCBIfam" id="TIGR02349">
    <property type="entry name" value="DnaJ_bact"/>
    <property type="match status" value="1"/>
</dbReference>
<dbReference type="NCBIfam" id="NF008035">
    <property type="entry name" value="PRK10767.1"/>
    <property type="match status" value="1"/>
</dbReference>
<dbReference type="NCBIfam" id="NF010873">
    <property type="entry name" value="PRK14280.1"/>
    <property type="match status" value="1"/>
</dbReference>
<dbReference type="PANTHER" id="PTHR43096:SF48">
    <property type="entry name" value="CHAPERONE PROTEIN DNAJ"/>
    <property type="match status" value="1"/>
</dbReference>
<dbReference type="PANTHER" id="PTHR43096">
    <property type="entry name" value="DNAJ HOMOLOG 1, MITOCHONDRIAL-RELATED"/>
    <property type="match status" value="1"/>
</dbReference>
<dbReference type="Pfam" id="PF00226">
    <property type="entry name" value="DnaJ"/>
    <property type="match status" value="1"/>
</dbReference>
<dbReference type="Pfam" id="PF01556">
    <property type="entry name" value="DnaJ_C"/>
    <property type="match status" value="1"/>
</dbReference>
<dbReference type="Pfam" id="PF00684">
    <property type="entry name" value="DnaJ_CXXCXGXG"/>
    <property type="match status" value="1"/>
</dbReference>
<dbReference type="PRINTS" id="PR00625">
    <property type="entry name" value="JDOMAIN"/>
</dbReference>
<dbReference type="SMART" id="SM00271">
    <property type="entry name" value="DnaJ"/>
    <property type="match status" value="1"/>
</dbReference>
<dbReference type="SUPFAM" id="SSF46565">
    <property type="entry name" value="Chaperone J-domain"/>
    <property type="match status" value="1"/>
</dbReference>
<dbReference type="SUPFAM" id="SSF57938">
    <property type="entry name" value="DnaJ/Hsp40 cysteine-rich domain"/>
    <property type="match status" value="1"/>
</dbReference>
<dbReference type="SUPFAM" id="SSF49493">
    <property type="entry name" value="HSP40/DnaJ peptide-binding domain"/>
    <property type="match status" value="2"/>
</dbReference>
<dbReference type="PROSITE" id="PS00636">
    <property type="entry name" value="DNAJ_1"/>
    <property type="match status" value="1"/>
</dbReference>
<dbReference type="PROSITE" id="PS50076">
    <property type="entry name" value="DNAJ_2"/>
    <property type="match status" value="1"/>
</dbReference>
<dbReference type="PROSITE" id="PS51188">
    <property type="entry name" value="ZF_CR"/>
    <property type="match status" value="1"/>
</dbReference>
<feature type="chain" id="PRO_0000070717" description="Chaperone protein DnaJ">
    <location>
        <begin position="1"/>
        <end position="371"/>
    </location>
</feature>
<feature type="domain" description="J" evidence="1">
    <location>
        <begin position="5"/>
        <end position="69"/>
    </location>
</feature>
<feature type="repeat" description="CXXCXGXG motif">
    <location>
        <begin position="146"/>
        <end position="153"/>
    </location>
</feature>
<feature type="repeat" description="CXXCXGXG motif">
    <location>
        <begin position="163"/>
        <end position="170"/>
    </location>
</feature>
<feature type="repeat" description="CXXCXGXG motif">
    <location>
        <begin position="189"/>
        <end position="196"/>
    </location>
</feature>
<feature type="repeat" description="CXXCXGXG motif">
    <location>
        <begin position="203"/>
        <end position="210"/>
    </location>
</feature>
<feature type="zinc finger region" description="CR-type" evidence="1">
    <location>
        <begin position="133"/>
        <end position="215"/>
    </location>
</feature>
<feature type="binding site" evidence="1">
    <location>
        <position position="146"/>
    </location>
    <ligand>
        <name>Zn(2+)</name>
        <dbReference type="ChEBI" id="CHEBI:29105"/>
        <label>1</label>
    </ligand>
</feature>
<feature type="binding site" evidence="1">
    <location>
        <position position="149"/>
    </location>
    <ligand>
        <name>Zn(2+)</name>
        <dbReference type="ChEBI" id="CHEBI:29105"/>
        <label>1</label>
    </ligand>
</feature>
<feature type="binding site" evidence="1">
    <location>
        <position position="163"/>
    </location>
    <ligand>
        <name>Zn(2+)</name>
        <dbReference type="ChEBI" id="CHEBI:29105"/>
        <label>2</label>
    </ligand>
</feature>
<feature type="binding site" evidence="1">
    <location>
        <position position="166"/>
    </location>
    <ligand>
        <name>Zn(2+)</name>
        <dbReference type="ChEBI" id="CHEBI:29105"/>
        <label>2</label>
    </ligand>
</feature>
<feature type="binding site" evidence="1">
    <location>
        <position position="189"/>
    </location>
    <ligand>
        <name>Zn(2+)</name>
        <dbReference type="ChEBI" id="CHEBI:29105"/>
        <label>2</label>
    </ligand>
</feature>
<feature type="binding site" evidence="1">
    <location>
        <position position="192"/>
    </location>
    <ligand>
        <name>Zn(2+)</name>
        <dbReference type="ChEBI" id="CHEBI:29105"/>
        <label>2</label>
    </ligand>
</feature>
<feature type="binding site" evidence="1">
    <location>
        <position position="203"/>
    </location>
    <ligand>
        <name>Zn(2+)</name>
        <dbReference type="ChEBI" id="CHEBI:29105"/>
        <label>1</label>
    </ligand>
</feature>
<feature type="binding site" evidence="1">
    <location>
        <position position="206"/>
    </location>
    <ligand>
        <name>Zn(2+)</name>
        <dbReference type="ChEBI" id="CHEBI:29105"/>
        <label>1</label>
    </ligand>
</feature>
<name>DNAJ_BACCR</name>